<evidence type="ECO:0000250" key="1"/>
<evidence type="ECO:0000255" key="2"/>
<evidence type="ECO:0000269" key="3">
    <source>
    </source>
</evidence>
<evidence type="ECO:0000303" key="4">
    <source ref="6"/>
</evidence>
<evidence type="ECO:0000305" key="5"/>
<keyword id="KW-0025">Alternative splicing</keyword>
<keyword id="KW-1003">Cell membrane</keyword>
<keyword id="KW-0472">Membrane</keyword>
<keyword id="KW-1185">Reference proteome</keyword>
<keyword id="KW-0812">Transmembrane</keyword>
<keyword id="KW-1133">Transmembrane helix</keyword>
<reference key="1">
    <citation type="journal article" date="1998" name="Nature">
        <title>Analysis of 1.9 Mb of contiguous sequence from chromosome 4 of Arabidopsis thaliana.</title>
        <authorList>
            <person name="Bevan M."/>
            <person name="Bancroft I."/>
            <person name="Bent E."/>
            <person name="Love K."/>
            <person name="Goodman H.M."/>
            <person name="Dean C."/>
            <person name="Bergkamp R."/>
            <person name="Dirkse W."/>
            <person name="van Staveren M."/>
            <person name="Stiekema W."/>
            <person name="Drost L."/>
            <person name="Ridley P."/>
            <person name="Hudson S.-A."/>
            <person name="Patel K."/>
            <person name="Murphy G."/>
            <person name="Piffanelli P."/>
            <person name="Wedler H."/>
            <person name="Wedler E."/>
            <person name="Wambutt R."/>
            <person name="Weitzenegger T."/>
            <person name="Pohl T."/>
            <person name="Terryn N."/>
            <person name="Gielen J."/>
            <person name="Villarroel R."/>
            <person name="De Clercq R."/>
            <person name="van Montagu M."/>
            <person name="Lecharny A."/>
            <person name="Aubourg S."/>
            <person name="Gy I."/>
            <person name="Kreis M."/>
            <person name="Lao N."/>
            <person name="Kavanagh T."/>
            <person name="Hempel S."/>
            <person name="Kotter P."/>
            <person name="Entian K.-D."/>
            <person name="Rieger M."/>
            <person name="Schaefer M."/>
            <person name="Funk B."/>
            <person name="Mueller-Auer S."/>
            <person name="Silvey M."/>
            <person name="James R."/>
            <person name="Monfort A."/>
            <person name="Pons A."/>
            <person name="Puigdomenech P."/>
            <person name="Douka A."/>
            <person name="Voukelatou E."/>
            <person name="Milioni D."/>
            <person name="Hatzopoulos P."/>
            <person name="Piravandi E."/>
            <person name="Obermaier B."/>
            <person name="Hilbert H."/>
            <person name="Duesterhoeft A."/>
            <person name="Moores T."/>
            <person name="Jones J.D.G."/>
            <person name="Eneva T."/>
            <person name="Palme K."/>
            <person name="Benes V."/>
            <person name="Rechmann S."/>
            <person name="Ansorge W."/>
            <person name="Cooke R."/>
            <person name="Berger C."/>
            <person name="Delseny M."/>
            <person name="Voet M."/>
            <person name="Volckaert G."/>
            <person name="Mewes H.-W."/>
            <person name="Klosterman S."/>
            <person name="Schueller C."/>
            <person name="Chalwatzis N."/>
        </authorList>
    </citation>
    <scope>NUCLEOTIDE SEQUENCE [LARGE SCALE GENOMIC DNA]</scope>
    <source>
        <strain>cv. Columbia</strain>
    </source>
</reference>
<reference key="2">
    <citation type="journal article" date="1999" name="Nature">
        <title>Sequence and analysis of chromosome 4 of the plant Arabidopsis thaliana.</title>
        <authorList>
            <person name="Mayer K.F.X."/>
            <person name="Schueller C."/>
            <person name="Wambutt R."/>
            <person name="Murphy G."/>
            <person name="Volckaert G."/>
            <person name="Pohl T."/>
            <person name="Duesterhoeft A."/>
            <person name="Stiekema W."/>
            <person name="Entian K.-D."/>
            <person name="Terryn N."/>
            <person name="Harris B."/>
            <person name="Ansorge W."/>
            <person name="Brandt P."/>
            <person name="Grivell L.A."/>
            <person name="Rieger M."/>
            <person name="Weichselgartner M."/>
            <person name="de Simone V."/>
            <person name="Obermaier B."/>
            <person name="Mache R."/>
            <person name="Mueller M."/>
            <person name="Kreis M."/>
            <person name="Delseny M."/>
            <person name="Puigdomenech P."/>
            <person name="Watson M."/>
            <person name="Schmidtheini T."/>
            <person name="Reichert B."/>
            <person name="Portetelle D."/>
            <person name="Perez-Alonso M."/>
            <person name="Boutry M."/>
            <person name="Bancroft I."/>
            <person name="Vos P."/>
            <person name="Hoheisel J."/>
            <person name="Zimmermann W."/>
            <person name="Wedler H."/>
            <person name="Ridley P."/>
            <person name="Langham S.-A."/>
            <person name="McCullagh B."/>
            <person name="Bilham L."/>
            <person name="Robben J."/>
            <person name="van der Schueren J."/>
            <person name="Grymonprez B."/>
            <person name="Chuang Y.-J."/>
            <person name="Vandenbussche F."/>
            <person name="Braeken M."/>
            <person name="Weltjens I."/>
            <person name="Voet M."/>
            <person name="Bastiaens I."/>
            <person name="Aert R."/>
            <person name="Defoor E."/>
            <person name="Weitzenegger T."/>
            <person name="Bothe G."/>
            <person name="Ramsperger U."/>
            <person name="Hilbert H."/>
            <person name="Braun M."/>
            <person name="Holzer E."/>
            <person name="Brandt A."/>
            <person name="Peters S."/>
            <person name="van Staveren M."/>
            <person name="Dirkse W."/>
            <person name="Mooijman P."/>
            <person name="Klein Lankhorst R."/>
            <person name="Rose M."/>
            <person name="Hauf J."/>
            <person name="Koetter P."/>
            <person name="Berneiser S."/>
            <person name="Hempel S."/>
            <person name="Feldpausch M."/>
            <person name="Lamberth S."/>
            <person name="Van den Daele H."/>
            <person name="De Keyser A."/>
            <person name="Buysshaert C."/>
            <person name="Gielen J."/>
            <person name="Villarroel R."/>
            <person name="De Clercq R."/>
            <person name="van Montagu M."/>
            <person name="Rogers J."/>
            <person name="Cronin A."/>
            <person name="Quail M.A."/>
            <person name="Bray-Allen S."/>
            <person name="Clark L."/>
            <person name="Doggett J."/>
            <person name="Hall S."/>
            <person name="Kay M."/>
            <person name="Lennard N."/>
            <person name="McLay K."/>
            <person name="Mayes R."/>
            <person name="Pettett A."/>
            <person name="Rajandream M.A."/>
            <person name="Lyne M."/>
            <person name="Benes V."/>
            <person name="Rechmann S."/>
            <person name="Borkova D."/>
            <person name="Bloecker H."/>
            <person name="Scharfe M."/>
            <person name="Grimm M."/>
            <person name="Loehnert T.-H."/>
            <person name="Dose S."/>
            <person name="de Haan M."/>
            <person name="Maarse A.C."/>
            <person name="Schaefer M."/>
            <person name="Mueller-Auer S."/>
            <person name="Gabel C."/>
            <person name="Fuchs M."/>
            <person name="Fartmann B."/>
            <person name="Granderath K."/>
            <person name="Dauner D."/>
            <person name="Herzl A."/>
            <person name="Neumann S."/>
            <person name="Argiriou A."/>
            <person name="Vitale D."/>
            <person name="Liguori R."/>
            <person name="Piravandi E."/>
            <person name="Massenet O."/>
            <person name="Quigley F."/>
            <person name="Clabauld G."/>
            <person name="Muendlein A."/>
            <person name="Felber R."/>
            <person name="Schnabl S."/>
            <person name="Hiller R."/>
            <person name="Schmidt W."/>
            <person name="Lecharny A."/>
            <person name="Aubourg S."/>
            <person name="Chefdor F."/>
            <person name="Cooke R."/>
            <person name="Berger C."/>
            <person name="Monfort A."/>
            <person name="Casacuberta E."/>
            <person name="Gibbons T."/>
            <person name="Weber N."/>
            <person name="Vandenbol M."/>
            <person name="Bargues M."/>
            <person name="Terol J."/>
            <person name="Torres A."/>
            <person name="Perez-Perez A."/>
            <person name="Purnelle B."/>
            <person name="Bent E."/>
            <person name="Johnson S."/>
            <person name="Tacon D."/>
            <person name="Jesse T."/>
            <person name="Heijnen L."/>
            <person name="Schwarz S."/>
            <person name="Scholler P."/>
            <person name="Heber S."/>
            <person name="Francs P."/>
            <person name="Bielke C."/>
            <person name="Frishman D."/>
            <person name="Haase D."/>
            <person name="Lemcke K."/>
            <person name="Mewes H.-W."/>
            <person name="Stocker S."/>
            <person name="Zaccaria P."/>
            <person name="Bevan M."/>
            <person name="Wilson R.K."/>
            <person name="de la Bastide M."/>
            <person name="Habermann K."/>
            <person name="Parnell L."/>
            <person name="Dedhia N."/>
            <person name="Gnoj L."/>
            <person name="Schutz K."/>
            <person name="Huang E."/>
            <person name="Spiegel L."/>
            <person name="Sekhon M."/>
            <person name="Murray J."/>
            <person name="Sheet P."/>
            <person name="Cordes M."/>
            <person name="Abu-Threideh J."/>
            <person name="Stoneking T."/>
            <person name="Kalicki J."/>
            <person name="Graves T."/>
            <person name="Harmon G."/>
            <person name="Edwards J."/>
            <person name="Latreille P."/>
            <person name="Courtney L."/>
            <person name="Cloud J."/>
            <person name="Abbott A."/>
            <person name="Scott K."/>
            <person name="Johnson D."/>
            <person name="Minx P."/>
            <person name="Bentley D."/>
            <person name="Fulton B."/>
            <person name="Miller N."/>
            <person name="Greco T."/>
            <person name="Kemp K."/>
            <person name="Kramer J."/>
            <person name="Fulton L."/>
            <person name="Mardis E."/>
            <person name="Dante M."/>
            <person name="Pepin K."/>
            <person name="Hillier L.W."/>
            <person name="Nelson J."/>
            <person name="Spieth J."/>
            <person name="Ryan E."/>
            <person name="Andrews S."/>
            <person name="Geisel C."/>
            <person name="Layman D."/>
            <person name="Du H."/>
            <person name="Ali J."/>
            <person name="Berghoff A."/>
            <person name="Jones K."/>
            <person name="Drone K."/>
            <person name="Cotton M."/>
            <person name="Joshu C."/>
            <person name="Antonoiu B."/>
            <person name="Zidanic M."/>
            <person name="Strong C."/>
            <person name="Sun H."/>
            <person name="Lamar B."/>
            <person name="Yordan C."/>
            <person name="Ma P."/>
            <person name="Zhong J."/>
            <person name="Preston R."/>
            <person name="Vil D."/>
            <person name="Shekher M."/>
            <person name="Matero A."/>
            <person name="Shah R."/>
            <person name="Swaby I.K."/>
            <person name="O'Shaughnessy A."/>
            <person name="Rodriguez M."/>
            <person name="Hoffman J."/>
            <person name="Till S."/>
            <person name="Granat S."/>
            <person name="Shohdy N."/>
            <person name="Hasegawa A."/>
            <person name="Hameed A."/>
            <person name="Lodhi M."/>
            <person name="Johnson A."/>
            <person name="Chen E."/>
            <person name="Marra M.A."/>
            <person name="Martienssen R."/>
            <person name="McCombie W.R."/>
        </authorList>
    </citation>
    <scope>NUCLEOTIDE SEQUENCE [LARGE SCALE GENOMIC DNA]</scope>
    <source>
        <strain>cv. Columbia</strain>
    </source>
</reference>
<reference key="3">
    <citation type="journal article" date="2017" name="Plant J.">
        <title>Araport11: a complete reannotation of the Arabidopsis thaliana reference genome.</title>
        <authorList>
            <person name="Cheng C.Y."/>
            <person name="Krishnakumar V."/>
            <person name="Chan A.P."/>
            <person name="Thibaud-Nissen F."/>
            <person name="Schobel S."/>
            <person name="Town C.D."/>
        </authorList>
    </citation>
    <scope>GENOME REANNOTATION</scope>
    <source>
        <strain>cv. Columbia</strain>
    </source>
</reference>
<reference key="4">
    <citation type="journal article" date="2003" name="Science">
        <title>Empirical analysis of transcriptional activity in the Arabidopsis genome.</title>
        <authorList>
            <person name="Yamada K."/>
            <person name="Lim J."/>
            <person name="Dale J.M."/>
            <person name="Chen H."/>
            <person name="Shinn P."/>
            <person name="Palm C.J."/>
            <person name="Southwick A.M."/>
            <person name="Wu H.C."/>
            <person name="Kim C.J."/>
            <person name="Nguyen M."/>
            <person name="Pham P.K."/>
            <person name="Cheuk R.F."/>
            <person name="Karlin-Newmann G."/>
            <person name="Liu S.X."/>
            <person name="Lam B."/>
            <person name="Sakano H."/>
            <person name="Wu T."/>
            <person name="Yu G."/>
            <person name="Miranda M."/>
            <person name="Quach H.L."/>
            <person name="Tripp M."/>
            <person name="Chang C.H."/>
            <person name="Lee J.M."/>
            <person name="Toriumi M.J."/>
            <person name="Chan M.M."/>
            <person name="Tang C.C."/>
            <person name="Onodera C.S."/>
            <person name="Deng J.M."/>
            <person name="Akiyama K."/>
            <person name="Ansari Y."/>
            <person name="Arakawa T."/>
            <person name="Banh J."/>
            <person name="Banno F."/>
            <person name="Bowser L."/>
            <person name="Brooks S.Y."/>
            <person name="Carninci P."/>
            <person name="Chao Q."/>
            <person name="Choy N."/>
            <person name="Enju A."/>
            <person name="Goldsmith A.D."/>
            <person name="Gurjal M."/>
            <person name="Hansen N.F."/>
            <person name="Hayashizaki Y."/>
            <person name="Johnson-Hopson C."/>
            <person name="Hsuan V.W."/>
            <person name="Iida K."/>
            <person name="Karnes M."/>
            <person name="Khan S."/>
            <person name="Koesema E."/>
            <person name="Ishida J."/>
            <person name="Jiang P.X."/>
            <person name="Jones T."/>
            <person name="Kawai J."/>
            <person name="Kamiya A."/>
            <person name="Meyers C."/>
            <person name="Nakajima M."/>
            <person name="Narusaka M."/>
            <person name="Seki M."/>
            <person name="Sakurai T."/>
            <person name="Satou M."/>
            <person name="Tamse R."/>
            <person name="Vaysberg M."/>
            <person name="Wallender E.K."/>
            <person name="Wong C."/>
            <person name="Yamamura Y."/>
            <person name="Yuan S."/>
            <person name="Shinozaki K."/>
            <person name="Davis R.W."/>
            <person name="Theologis A."/>
            <person name="Ecker J.R."/>
        </authorList>
    </citation>
    <scope>NUCLEOTIDE SEQUENCE [LARGE SCALE MRNA] (ISOFORM 1)</scope>
    <source>
        <strain>cv. Columbia</strain>
    </source>
</reference>
<reference key="5">
    <citation type="submission" date="2002-03" db="EMBL/GenBank/DDBJ databases">
        <title>Full-length cDNA from Arabidopsis thaliana.</title>
        <authorList>
            <person name="Brover V.V."/>
            <person name="Troukhan M.E."/>
            <person name="Alexandrov N.A."/>
            <person name="Lu Y.-P."/>
            <person name="Flavell R.B."/>
            <person name="Feldmann K.A."/>
        </authorList>
    </citation>
    <scope>NUCLEOTIDE SEQUENCE [LARGE SCALE MRNA] (ISOFORM 1)</scope>
</reference>
<reference key="6">
    <citation type="submission" date="2006-07" db="EMBL/GenBank/DDBJ databases">
        <title>Large-scale analysis of RIKEN Arabidopsis full-length (RAFL) cDNAs.</title>
        <authorList>
            <person name="Totoki Y."/>
            <person name="Seki M."/>
            <person name="Ishida J."/>
            <person name="Nakajima M."/>
            <person name="Enju A."/>
            <person name="Kamiya A."/>
            <person name="Narusaka M."/>
            <person name="Shin-i T."/>
            <person name="Nakagawa M."/>
            <person name="Sakamoto N."/>
            <person name="Oishi K."/>
            <person name="Kohara Y."/>
            <person name="Kobayashi M."/>
            <person name="Toyoda A."/>
            <person name="Sakaki Y."/>
            <person name="Sakurai T."/>
            <person name="Iida K."/>
            <person name="Akiyama K."/>
            <person name="Satou M."/>
            <person name="Toyoda T."/>
            <person name="Konagaya A."/>
            <person name="Carninci P."/>
            <person name="Kawai J."/>
            <person name="Hayashizaki Y."/>
            <person name="Shinozaki K."/>
        </authorList>
    </citation>
    <scope>NUCLEOTIDE SEQUENCE [LARGE SCALE MRNA] (ISOFORM 2)</scope>
    <source>
        <strain>cv. Columbia</strain>
    </source>
</reference>
<reference key="7">
    <citation type="journal article" date="2014" name="Plant Physiol.">
        <title>Functional and evolutionary analysis of the CASPARIAN STRIP MEMBRANE DOMAIN PROTEIN family.</title>
        <authorList>
            <person name="Roppolo D."/>
            <person name="Boeckmann B."/>
            <person name="Pfister A."/>
            <person name="Boutet E."/>
            <person name="Rubio M.C."/>
            <person name="Denervaud-Tendon V."/>
            <person name="Vermeer J.E."/>
            <person name="Gheyselinck J."/>
            <person name="Xenarios I."/>
            <person name="Geldner N."/>
        </authorList>
    </citation>
    <scope>SUBCELLULAR LOCATION</scope>
    <scope>GENE FAMILY</scope>
    <scope>NOMENCLATURE</scope>
</reference>
<accession>Q8L9B5</accession>
<accession>O23488</accession>
<accession>Q0WQU0</accession>
<gene>
    <name type="ordered locus">At4g16442</name>
    <name type="ORF">Dl4245c</name>
    <name type="ORF">FCAALL.228</name>
</gene>
<name>CSPLP_ARATH</name>
<organism>
    <name type="scientific">Arabidopsis thaliana</name>
    <name type="common">Mouse-ear cress</name>
    <dbReference type="NCBI Taxonomy" id="3702"/>
    <lineage>
        <taxon>Eukaryota</taxon>
        <taxon>Viridiplantae</taxon>
        <taxon>Streptophyta</taxon>
        <taxon>Embryophyta</taxon>
        <taxon>Tracheophyta</taxon>
        <taxon>Spermatophyta</taxon>
        <taxon>Magnoliopsida</taxon>
        <taxon>eudicotyledons</taxon>
        <taxon>Gunneridae</taxon>
        <taxon>Pentapetalae</taxon>
        <taxon>rosids</taxon>
        <taxon>malvids</taxon>
        <taxon>Brassicales</taxon>
        <taxon>Brassicaceae</taxon>
        <taxon>Camelineae</taxon>
        <taxon>Arabidopsis</taxon>
    </lineage>
</organism>
<sequence>MKLIDRRMRLTELLLRCSISVFALLALILVVTDTEVKLIFTIKKTAKYTDMKAVVFLVVANGIAAVYSLLQSVRCVVGTMKGKVLFSKPLAWAFFSGDQAMAYLNVAAIAATAESGVIAREGEEDLQWMRVCTMYGKFCNQMAIGVSSALLASIAMVFVSCISAFSLFRLYGATKDRRTTPW</sequence>
<comment type="subunit">
    <text evidence="1">Homodimer and heterodimers.</text>
</comment>
<comment type="subcellular location">
    <subcellularLocation>
        <location evidence="3">Cell membrane</location>
        <topology evidence="3">Multi-pass membrane protein</topology>
    </subcellularLocation>
</comment>
<comment type="alternative products">
    <event type="alternative splicing"/>
    <isoform>
        <id>Q8L9B5-1</id>
        <name>1</name>
        <sequence type="displayed"/>
    </isoform>
    <isoform>
        <id>Q8L9B5-2</id>
        <name>2</name>
        <sequence type="described" ref="VSP_029042"/>
    </isoform>
</comment>
<comment type="miscellaneous">
    <molecule>Isoform 2</molecule>
    <text evidence="5">May be due to intron retention.</text>
</comment>
<comment type="similarity">
    <text evidence="5">Belongs to the Casparian strip membrane proteins (CASP) family.</text>
</comment>
<comment type="sequence caution" evidence="5">
    <conflict type="erroneous gene model prediction">
        <sequence resource="EMBL-CDS" id="CAB10420"/>
    </conflict>
    <text>The predicted gene At4g16440 has been split into 3 genes: At4g16440, At4g16442 and At4g16444.</text>
</comment>
<comment type="sequence caution" evidence="5">
    <conflict type="erroneous gene model prediction">
        <sequence resource="EMBL-CDS" id="CAB78686"/>
    </conflict>
    <text>The predicted gene At4g16440 has been split into 3 genes: At4g16440, At4g16442 and At4g16444.</text>
</comment>
<proteinExistence type="evidence at transcript level"/>
<protein>
    <recommendedName>
        <fullName>CASP-like protein 2B1</fullName>
        <shortName>AtCASPL2B1</shortName>
    </recommendedName>
</protein>
<feature type="chain" id="PRO_0000308678" description="CASP-like protein 2B1">
    <location>
        <begin position="1"/>
        <end position="182"/>
    </location>
</feature>
<feature type="topological domain" description="Cytoplasmic" evidence="2">
    <location>
        <begin position="1"/>
        <end position="12"/>
    </location>
</feature>
<feature type="transmembrane region" description="Helical" evidence="2">
    <location>
        <begin position="13"/>
        <end position="31"/>
    </location>
</feature>
<feature type="topological domain" description="Extracellular" evidence="2">
    <location>
        <begin position="32"/>
        <end position="52"/>
    </location>
</feature>
<feature type="transmembrane region" description="Helical" evidence="2">
    <location>
        <begin position="53"/>
        <end position="73"/>
    </location>
</feature>
<feature type="topological domain" description="Cytoplasmic" evidence="2">
    <location>
        <begin position="74"/>
        <end position="89"/>
    </location>
</feature>
<feature type="transmembrane region" description="Helical" evidence="2">
    <location>
        <begin position="90"/>
        <end position="110"/>
    </location>
</feature>
<feature type="topological domain" description="Extracellular" evidence="2">
    <location>
        <begin position="111"/>
        <end position="141"/>
    </location>
</feature>
<feature type="transmembrane region" description="Helical" evidence="2">
    <location>
        <begin position="142"/>
        <end position="162"/>
    </location>
</feature>
<feature type="topological domain" description="Cytoplasmic" evidence="2">
    <location>
        <begin position="163"/>
        <end position="182"/>
    </location>
</feature>
<feature type="splice variant" id="VSP_029042" description="In isoform 2." evidence="4">
    <location>
        <begin position="1"/>
        <end position="100"/>
    </location>
</feature>
<dbReference type="EMBL" id="Z97341">
    <property type="protein sequence ID" value="CAB10420.1"/>
    <property type="status" value="ALT_SEQ"/>
    <property type="molecule type" value="Genomic_DNA"/>
</dbReference>
<dbReference type="EMBL" id="AL161544">
    <property type="protein sequence ID" value="CAB78686.1"/>
    <property type="status" value="ALT_SEQ"/>
    <property type="molecule type" value="Genomic_DNA"/>
</dbReference>
<dbReference type="EMBL" id="CP002687">
    <property type="protein sequence ID" value="AEE83749.1"/>
    <property type="molecule type" value="Genomic_DNA"/>
</dbReference>
<dbReference type="EMBL" id="BT003927">
    <property type="protein sequence ID" value="AAO41974.1"/>
    <property type="molecule type" value="mRNA"/>
</dbReference>
<dbReference type="EMBL" id="BT006082">
    <property type="protein sequence ID" value="AAP04067.1"/>
    <property type="molecule type" value="mRNA"/>
</dbReference>
<dbReference type="EMBL" id="AY088534">
    <property type="protein sequence ID" value="AAM66067.1"/>
    <property type="molecule type" value="mRNA"/>
</dbReference>
<dbReference type="EMBL" id="AK228594">
    <property type="protein sequence ID" value="BAF00509.1"/>
    <property type="molecule type" value="mRNA"/>
</dbReference>
<dbReference type="PIR" id="B71431">
    <property type="entry name" value="B71431"/>
</dbReference>
<dbReference type="RefSeq" id="NP_567497.1">
    <molecule id="Q8L9B5-1"/>
    <property type="nucleotide sequence ID" value="NM_117740.5"/>
</dbReference>
<dbReference type="SMR" id="Q8L9B5"/>
<dbReference type="FunCoup" id="Q8L9B5">
    <property type="interactions" value="7"/>
</dbReference>
<dbReference type="PaxDb" id="3702-AT4G16442.1"/>
<dbReference type="ProteomicsDB" id="222692">
    <molecule id="Q8L9B5-1"/>
</dbReference>
<dbReference type="EnsemblPlants" id="AT4G16442.1">
    <molecule id="Q8L9B5-1"/>
    <property type="protein sequence ID" value="AT4G16442.1"/>
    <property type="gene ID" value="AT4G16442"/>
</dbReference>
<dbReference type="GeneID" id="827339"/>
<dbReference type="Gramene" id="AT4G16442.1">
    <molecule id="Q8L9B5-1"/>
    <property type="protein sequence ID" value="AT4G16442.1"/>
    <property type="gene ID" value="AT4G16442"/>
</dbReference>
<dbReference type="KEGG" id="ath:AT4G16442"/>
<dbReference type="Araport" id="AT4G16442"/>
<dbReference type="TAIR" id="AT4G16442">
    <property type="gene designation" value="CASPL2B1"/>
</dbReference>
<dbReference type="eggNOG" id="ENOG502QQH2">
    <property type="taxonomic scope" value="Eukaryota"/>
</dbReference>
<dbReference type="HOGENOM" id="CLU_066104_0_1_1"/>
<dbReference type="InParanoid" id="Q8L9B5"/>
<dbReference type="OMA" id="WMKLCNM"/>
<dbReference type="OrthoDB" id="689701at2759"/>
<dbReference type="PhylomeDB" id="Q8L9B5"/>
<dbReference type="PRO" id="PR:Q8L9B5"/>
<dbReference type="Proteomes" id="UP000006548">
    <property type="component" value="Chromosome 4"/>
</dbReference>
<dbReference type="ExpressionAtlas" id="Q8L9B5">
    <property type="expression patterns" value="baseline and differential"/>
</dbReference>
<dbReference type="GO" id="GO:0005886">
    <property type="term" value="C:plasma membrane"/>
    <property type="evidence" value="ECO:0000314"/>
    <property type="project" value="UniProtKB"/>
</dbReference>
<dbReference type="InterPro" id="IPR006459">
    <property type="entry name" value="CASP/CASPL"/>
</dbReference>
<dbReference type="InterPro" id="IPR006702">
    <property type="entry name" value="CASP_dom"/>
</dbReference>
<dbReference type="NCBIfam" id="TIGR01569">
    <property type="entry name" value="A_tha_TIGR01569"/>
    <property type="match status" value="1"/>
</dbReference>
<dbReference type="PANTHER" id="PTHR33573:SF64">
    <property type="entry name" value="CASP-LIKE PROTEIN 2B1"/>
    <property type="match status" value="1"/>
</dbReference>
<dbReference type="PANTHER" id="PTHR33573">
    <property type="entry name" value="CASP-LIKE PROTEIN 4A4"/>
    <property type="match status" value="1"/>
</dbReference>
<dbReference type="Pfam" id="PF04535">
    <property type="entry name" value="CASP_dom"/>
    <property type="match status" value="1"/>
</dbReference>